<feature type="chain" id="PRO_0000101301" description="Uncharacterized protein RP028">
    <location>
        <begin position="1"/>
        <end position="250"/>
    </location>
</feature>
<accession>O05972</accession>
<sequence length="250" mass="28622">MIKKTNKISYDEVPYPPFTFSHTYPPYLRTIGKLFGLNPPPLETAKILDIGCGVGVNLLNFAETYPKSQSLGVDLSKTQIEIGKKTISDAKIKNVRLKALSILDLDESYGKFDYIVCHGVYSWVSKEVQDKILEVLNKLLNPNGIAFISYNTLPGWNMQNTIREMMMFHSESFNTSHDKLQQSKLLLKFINDSLENSTTPYANFLREEAKLISTYADSYVLHEYLGEINTGTYFHQFIEKAQKKPFKLLR</sequence>
<reference key="1">
    <citation type="journal article" date="1997" name="Microbiology">
        <title>Genomic rearrangements during evolution of the obligate intracellular parasite Rickettsia prowazekii as inferred from an analysis of 52015 bp nucleotide sequence.</title>
        <authorList>
            <person name="Andersson J.O."/>
            <person name="Andersson S.G.E."/>
        </authorList>
    </citation>
    <scope>NUCLEOTIDE SEQUENCE [GENOMIC DNA]</scope>
    <source>
        <strain>Madrid E</strain>
    </source>
</reference>
<reference key="2">
    <citation type="journal article" date="1998" name="Nature">
        <title>The genome sequence of Rickettsia prowazekii and the origin of mitochondria.</title>
        <authorList>
            <person name="Andersson S.G.E."/>
            <person name="Zomorodipour A."/>
            <person name="Andersson J.O."/>
            <person name="Sicheritz-Ponten T."/>
            <person name="Alsmark U.C.M."/>
            <person name="Podowski R.M."/>
            <person name="Naeslund A.K."/>
            <person name="Eriksson A.-S."/>
            <person name="Winkler H.H."/>
            <person name="Kurland C.G."/>
        </authorList>
    </citation>
    <scope>NUCLEOTIDE SEQUENCE [LARGE SCALE GENOMIC DNA]</scope>
    <source>
        <strain>Madrid E</strain>
    </source>
</reference>
<proteinExistence type="predicted"/>
<keyword id="KW-1185">Reference proteome</keyword>
<protein>
    <recommendedName>
        <fullName>Uncharacterized protein RP028</fullName>
    </recommendedName>
</protein>
<name>Y028_RICPR</name>
<dbReference type="EMBL" id="Y11781">
    <property type="protein sequence ID" value="CAA72470.1"/>
    <property type="molecule type" value="Genomic_DNA"/>
</dbReference>
<dbReference type="EMBL" id="AJ235270">
    <property type="protein sequence ID" value="CAA14499.1"/>
    <property type="molecule type" value="Genomic_DNA"/>
</dbReference>
<dbReference type="PIR" id="D71710">
    <property type="entry name" value="D71710"/>
</dbReference>
<dbReference type="RefSeq" id="NP_220422.1">
    <property type="nucleotide sequence ID" value="NC_000963.1"/>
</dbReference>
<dbReference type="SMR" id="O05972"/>
<dbReference type="STRING" id="272947.gene:17555111"/>
<dbReference type="EnsemblBacteria" id="CAA14499">
    <property type="protein sequence ID" value="CAA14499"/>
    <property type="gene ID" value="CAA14499"/>
</dbReference>
<dbReference type="KEGG" id="rpr:RP028"/>
<dbReference type="PATRIC" id="fig|272947.5.peg.28"/>
<dbReference type="eggNOG" id="COG0500">
    <property type="taxonomic scope" value="Bacteria"/>
</dbReference>
<dbReference type="HOGENOM" id="CLU_1110730_0_0_5"/>
<dbReference type="OrthoDB" id="5298787at2"/>
<dbReference type="Proteomes" id="UP000002480">
    <property type="component" value="Chromosome"/>
</dbReference>
<dbReference type="CDD" id="cd02440">
    <property type="entry name" value="AdoMet_MTases"/>
    <property type="match status" value="1"/>
</dbReference>
<dbReference type="Gene3D" id="3.40.50.150">
    <property type="entry name" value="Vaccinia Virus protein VP39"/>
    <property type="match status" value="1"/>
</dbReference>
<dbReference type="InterPro" id="IPR050723">
    <property type="entry name" value="CFA/CMAS"/>
</dbReference>
<dbReference type="InterPro" id="IPR025714">
    <property type="entry name" value="Methyltranfer_dom"/>
</dbReference>
<dbReference type="InterPro" id="IPR029063">
    <property type="entry name" value="SAM-dependent_MTases_sf"/>
</dbReference>
<dbReference type="PANTHER" id="PTHR43667">
    <property type="entry name" value="CYCLOPROPANE-FATTY-ACYL-PHOSPHOLIPID SYNTHASE"/>
    <property type="match status" value="1"/>
</dbReference>
<dbReference type="PANTHER" id="PTHR43667:SF2">
    <property type="entry name" value="FATTY ACID C-METHYL TRANSFERASE"/>
    <property type="match status" value="1"/>
</dbReference>
<dbReference type="Pfam" id="PF13847">
    <property type="entry name" value="Methyltransf_31"/>
    <property type="match status" value="1"/>
</dbReference>
<dbReference type="SUPFAM" id="SSF53335">
    <property type="entry name" value="S-adenosyl-L-methionine-dependent methyltransferases"/>
    <property type="match status" value="1"/>
</dbReference>
<organism>
    <name type="scientific">Rickettsia prowazekii (strain Madrid E)</name>
    <dbReference type="NCBI Taxonomy" id="272947"/>
    <lineage>
        <taxon>Bacteria</taxon>
        <taxon>Pseudomonadati</taxon>
        <taxon>Pseudomonadota</taxon>
        <taxon>Alphaproteobacteria</taxon>
        <taxon>Rickettsiales</taxon>
        <taxon>Rickettsiaceae</taxon>
        <taxon>Rickettsieae</taxon>
        <taxon>Rickettsia</taxon>
        <taxon>typhus group</taxon>
    </lineage>
</organism>
<gene>
    <name type="ordered locus">RP028</name>
</gene>